<protein>
    <recommendedName>
        <fullName evidence="1">ATP synthase subunit b 1</fullName>
    </recommendedName>
    <alternativeName>
        <fullName evidence="1">ATP synthase F(0) sector subunit b 1</fullName>
    </alternativeName>
    <alternativeName>
        <fullName evidence="1">ATPase subunit I 1</fullName>
    </alternativeName>
    <alternativeName>
        <fullName evidence="1">F-type ATPase subunit b 1</fullName>
        <shortName evidence="1">F-ATPase subunit b 1</shortName>
    </alternativeName>
</protein>
<keyword id="KW-0066">ATP synthesis</keyword>
<keyword id="KW-0997">Cell inner membrane</keyword>
<keyword id="KW-1003">Cell membrane</keyword>
<keyword id="KW-0138">CF(0)</keyword>
<keyword id="KW-0375">Hydrogen ion transport</keyword>
<keyword id="KW-0406">Ion transport</keyword>
<keyword id="KW-0472">Membrane</keyword>
<keyword id="KW-1185">Reference proteome</keyword>
<keyword id="KW-0812">Transmembrane</keyword>
<keyword id="KW-1133">Transmembrane helix</keyword>
<keyword id="KW-0813">Transport</keyword>
<evidence type="ECO:0000255" key="1">
    <source>
        <dbReference type="HAMAP-Rule" id="MF_01398"/>
    </source>
</evidence>
<comment type="function">
    <text evidence="1">F(1)F(0) ATP synthase produces ATP from ADP in the presence of a proton or sodium gradient. F-type ATPases consist of two structural domains, F(1) containing the extramembraneous catalytic core and F(0) containing the membrane proton channel, linked together by a central stalk and a peripheral stalk. During catalysis, ATP synthesis in the catalytic domain of F(1) is coupled via a rotary mechanism of the central stalk subunits to proton translocation.</text>
</comment>
<comment type="function">
    <text evidence="1">Component of the F(0) channel, it forms part of the peripheral stalk, linking F(1) to F(0).</text>
</comment>
<comment type="subunit">
    <text evidence="1">F-type ATPases have 2 components, F(1) - the catalytic core - and F(0) - the membrane proton channel. F(1) has five subunits: alpha(3), beta(3), gamma(1), delta(1), epsilon(1). F(0) has three main subunits: a(1), b(2) and c(10-14). The alpha and beta chains form an alternating ring which encloses part of the gamma chain. F(1) is attached to F(0) by a central stalk formed by the gamma and epsilon chains, while a peripheral stalk is formed by the delta and b chains.</text>
</comment>
<comment type="subcellular location">
    <subcellularLocation>
        <location evidence="1">Cell inner membrane</location>
        <topology evidence="1">Single-pass membrane protein</topology>
    </subcellularLocation>
</comment>
<comment type="similarity">
    <text evidence="1">Belongs to the ATPase B chain family.</text>
</comment>
<reference key="1">
    <citation type="journal article" date="2007" name="Science">
        <title>Legumes symbioses: absence of nod genes in photosynthetic bradyrhizobia.</title>
        <authorList>
            <person name="Giraud E."/>
            <person name="Moulin L."/>
            <person name="Vallenet D."/>
            <person name="Barbe V."/>
            <person name="Cytryn E."/>
            <person name="Avarre J.-C."/>
            <person name="Jaubert M."/>
            <person name="Simon D."/>
            <person name="Cartieaux F."/>
            <person name="Prin Y."/>
            <person name="Bena G."/>
            <person name="Hannibal L."/>
            <person name="Fardoux J."/>
            <person name="Kojadinovic M."/>
            <person name="Vuillet L."/>
            <person name="Lajus A."/>
            <person name="Cruveiller S."/>
            <person name="Rouy Z."/>
            <person name="Mangenot S."/>
            <person name="Segurens B."/>
            <person name="Dossat C."/>
            <person name="Franck W.L."/>
            <person name="Chang W.-S."/>
            <person name="Saunders E."/>
            <person name="Bruce D."/>
            <person name="Richardson P."/>
            <person name="Normand P."/>
            <person name="Dreyfus B."/>
            <person name="Pignol D."/>
            <person name="Stacey G."/>
            <person name="Emerich D."/>
            <person name="Vermeglio A."/>
            <person name="Medigue C."/>
            <person name="Sadowsky M."/>
        </authorList>
    </citation>
    <scope>NUCLEOTIDE SEQUENCE [LARGE SCALE GENOMIC DNA]</scope>
    <source>
        <strain>ORS 278</strain>
    </source>
</reference>
<feature type="chain" id="PRO_0000368363" description="ATP synthase subunit b 1">
    <location>
        <begin position="1"/>
        <end position="164"/>
    </location>
</feature>
<feature type="transmembrane region" description="Helical" evidence="1">
    <location>
        <begin position="8"/>
        <end position="28"/>
    </location>
</feature>
<accession>A4Z2B7</accession>
<name>ATPF1_BRASO</name>
<sequence>MMHLLADPETWVAIAFVILMGLFAYLGVHRMVLKALDHRADRIRDELAEAKRLKDEAAKVLADYKTRRASAEREAEEIVTSAKAEAERIAADAKAKMEDFVARRTKAAESKIALAEAQALADVRAAAAEAAVQAAATVLSQSVKGGLGDDLVAKGIAEVSRKLN</sequence>
<dbReference type="EMBL" id="CU234118">
    <property type="protein sequence ID" value="CAL80293.1"/>
    <property type="molecule type" value="Genomic_DNA"/>
</dbReference>
<dbReference type="SMR" id="A4Z2B7"/>
<dbReference type="STRING" id="114615.BRADO6689"/>
<dbReference type="KEGG" id="bra:BRADO6689"/>
<dbReference type="eggNOG" id="COG0711">
    <property type="taxonomic scope" value="Bacteria"/>
</dbReference>
<dbReference type="HOGENOM" id="CLU_079215_6_1_5"/>
<dbReference type="Proteomes" id="UP000001994">
    <property type="component" value="Chromosome"/>
</dbReference>
<dbReference type="GO" id="GO:0005886">
    <property type="term" value="C:plasma membrane"/>
    <property type="evidence" value="ECO:0007669"/>
    <property type="project" value="UniProtKB-SubCell"/>
</dbReference>
<dbReference type="GO" id="GO:0045259">
    <property type="term" value="C:proton-transporting ATP synthase complex"/>
    <property type="evidence" value="ECO:0007669"/>
    <property type="project" value="UniProtKB-KW"/>
</dbReference>
<dbReference type="GO" id="GO:0046933">
    <property type="term" value="F:proton-transporting ATP synthase activity, rotational mechanism"/>
    <property type="evidence" value="ECO:0007669"/>
    <property type="project" value="UniProtKB-UniRule"/>
</dbReference>
<dbReference type="GO" id="GO:0046961">
    <property type="term" value="F:proton-transporting ATPase activity, rotational mechanism"/>
    <property type="evidence" value="ECO:0007669"/>
    <property type="project" value="TreeGrafter"/>
</dbReference>
<dbReference type="CDD" id="cd06503">
    <property type="entry name" value="ATP-synt_Fo_b"/>
    <property type="match status" value="1"/>
</dbReference>
<dbReference type="HAMAP" id="MF_01398">
    <property type="entry name" value="ATP_synth_b_bprime"/>
    <property type="match status" value="1"/>
</dbReference>
<dbReference type="InterPro" id="IPR002146">
    <property type="entry name" value="ATP_synth_b/b'su_bac/chlpt"/>
</dbReference>
<dbReference type="InterPro" id="IPR050059">
    <property type="entry name" value="ATP_synthase_B_chain"/>
</dbReference>
<dbReference type="PANTHER" id="PTHR33445:SF1">
    <property type="entry name" value="ATP SYNTHASE SUBUNIT B"/>
    <property type="match status" value="1"/>
</dbReference>
<dbReference type="PANTHER" id="PTHR33445">
    <property type="entry name" value="ATP SYNTHASE SUBUNIT B', CHLOROPLASTIC"/>
    <property type="match status" value="1"/>
</dbReference>
<dbReference type="Pfam" id="PF00430">
    <property type="entry name" value="ATP-synt_B"/>
    <property type="match status" value="1"/>
</dbReference>
<proteinExistence type="inferred from homology"/>
<gene>
    <name evidence="1" type="primary">atpF1</name>
    <name type="ordered locus">BRADO6689</name>
</gene>
<organism>
    <name type="scientific">Bradyrhizobium sp. (strain ORS 278)</name>
    <dbReference type="NCBI Taxonomy" id="114615"/>
    <lineage>
        <taxon>Bacteria</taxon>
        <taxon>Pseudomonadati</taxon>
        <taxon>Pseudomonadota</taxon>
        <taxon>Alphaproteobacteria</taxon>
        <taxon>Hyphomicrobiales</taxon>
        <taxon>Nitrobacteraceae</taxon>
        <taxon>Bradyrhizobium</taxon>
    </lineage>
</organism>